<reference key="1">
    <citation type="journal article" date="2014" name="Stand. Genomic Sci.">
        <title>Complete genome sequence of Burkholderia phymatum STM815(T), a broad host range and efficient nitrogen-fixing symbiont of Mimosa species.</title>
        <authorList>
            <person name="Moulin L."/>
            <person name="Klonowska A."/>
            <person name="Caroline B."/>
            <person name="Booth K."/>
            <person name="Vriezen J.A."/>
            <person name="Melkonian R."/>
            <person name="James E.K."/>
            <person name="Young J.P."/>
            <person name="Bena G."/>
            <person name="Hauser L."/>
            <person name="Land M."/>
            <person name="Kyrpides N."/>
            <person name="Bruce D."/>
            <person name="Chain P."/>
            <person name="Copeland A."/>
            <person name="Pitluck S."/>
            <person name="Woyke T."/>
            <person name="Lizotte-Waniewski M."/>
            <person name="Bristow J."/>
            <person name="Riley M."/>
        </authorList>
    </citation>
    <scope>NUCLEOTIDE SEQUENCE [LARGE SCALE GENOMIC DNA]</scope>
    <source>
        <strain>DSM 17167 / CIP 108236 / LMG 21445 / STM815</strain>
    </source>
</reference>
<sequence>MGKIIGIDLGTTNSCVALMEGNQVKVIENSEGARTTPSIIAYMDDNEVLVGAPAKRQSVTNPKNTLYAVKRLIGRRFEEKEVQKDIGLMPYKIVKHDNGDAWVEAHGNKLAPSQVSAEVLRKMKKTAEDYLGEPVTEAVITVPAYFNDSQRQATKDAGRIAGLEVKRIINEPTAAALAFGLDKAEKGDRKIAVFDLGGGTFDISIIEIADVDGEKQFEVLSTNGDTFLGGEDFDQRIIDYIIGEFKKEQGVDLSKDVLALQRLKEAAEKAKIELSSGQQTEINLPYITADASGPKHLNLKITRAKLEALVEDLIERTIEPCRVAIKDAGVKVGEIDDVILVGGQTRMPKVQEKVKEFFGKDPRRDVNPDEAVAVGAAIQGQVLSGDRKDVLLLDVTPLSLGIETLGGVMTKMINKNTTIPTKHAQVYSTADDNQGAVTIKVFQGEREMAAGNKLLGEFNLEGIPPAPRGVPQIEVSFDIDANGILHVGAKDKATGKENRITIKANSGLSEAEIEKMVKDAEANAEEDHKLRELADARNQGDALVHSTKKALTEYGDKLEAGEKEKIEAALKDLEETLKNGSSDKAAIEAKIETVATASQKLGEKMYADMQAQGAAGAAGAAGGAGAAAGAEAAGASQQADDVVDAEFKEVKKD</sequence>
<gene>
    <name evidence="1" type="primary">dnaK</name>
    <name type="ordered locus">Bphy_2497</name>
</gene>
<evidence type="ECO:0000255" key="1">
    <source>
        <dbReference type="HAMAP-Rule" id="MF_00332"/>
    </source>
</evidence>
<evidence type="ECO:0000256" key="2">
    <source>
        <dbReference type="SAM" id="MobiDB-lite"/>
    </source>
</evidence>
<organism>
    <name type="scientific">Paraburkholderia phymatum (strain DSM 17167 / CIP 108236 / LMG 21445 / STM815)</name>
    <name type="common">Burkholderia phymatum</name>
    <dbReference type="NCBI Taxonomy" id="391038"/>
    <lineage>
        <taxon>Bacteria</taxon>
        <taxon>Pseudomonadati</taxon>
        <taxon>Pseudomonadota</taxon>
        <taxon>Betaproteobacteria</taxon>
        <taxon>Burkholderiales</taxon>
        <taxon>Burkholderiaceae</taxon>
        <taxon>Paraburkholderia</taxon>
    </lineage>
</organism>
<accession>B2JGE2</accession>
<proteinExistence type="inferred from homology"/>
<dbReference type="EMBL" id="CP001043">
    <property type="protein sequence ID" value="ACC71670.1"/>
    <property type="molecule type" value="Genomic_DNA"/>
</dbReference>
<dbReference type="RefSeq" id="WP_012401874.1">
    <property type="nucleotide sequence ID" value="NC_010622.1"/>
</dbReference>
<dbReference type="SMR" id="B2JGE2"/>
<dbReference type="STRING" id="391038.Bphy_2497"/>
<dbReference type="KEGG" id="bph:Bphy_2497"/>
<dbReference type="eggNOG" id="COG0443">
    <property type="taxonomic scope" value="Bacteria"/>
</dbReference>
<dbReference type="HOGENOM" id="CLU_005965_2_1_4"/>
<dbReference type="OrthoDB" id="9766019at2"/>
<dbReference type="Proteomes" id="UP000001192">
    <property type="component" value="Chromosome 1"/>
</dbReference>
<dbReference type="GO" id="GO:0005524">
    <property type="term" value="F:ATP binding"/>
    <property type="evidence" value="ECO:0007669"/>
    <property type="project" value="UniProtKB-UniRule"/>
</dbReference>
<dbReference type="GO" id="GO:0140662">
    <property type="term" value="F:ATP-dependent protein folding chaperone"/>
    <property type="evidence" value="ECO:0007669"/>
    <property type="project" value="InterPro"/>
</dbReference>
<dbReference type="GO" id="GO:0051082">
    <property type="term" value="F:unfolded protein binding"/>
    <property type="evidence" value="ECO:0007669"/>
    <property type="project" value="InterPro"/>
</dbReference>
<dbReference type="CDD" id="cd10234">
    <property type="entry name" value="ASKHA_NBD_HSP70_DnaK-like"/>
    <property type="match status" value="1"/>
</dbReference>
<dbReference type="FunFam" id="2.60.34.10:FF:000014">
    <property type="entry name" value="Chaperone protein DnaK HSP70"/>
    <property type="match status" value="1"/>
</dbReference>
<dbReference type="FunFam" id="1.20.1270.10:FF:000001">
    <property type="entry name" value="Molecular chaperone DnaK"/>
    <property type="match status" value="1"/>
</dbReference>
<dbReference type="FunFam" id="3.30.420.40:FF:000004">
    <property type="entry name" value="Molecular chaperone DnaK"/>
    <property type="match status" value="1"/>
</dbReference>
<dbReference type="FunFam" id="3.90.640.10:FF:000003">
    <property type="entry name" value="Molecular chaperone DnaK"/>
    <property type="match status" value="1"/>
</dbReference>
<dbReference type="Gene3D" id="1.20.1270.10">
    <property type="match status" value="1"/>
</dbReference>
<dbReference type="Gene3D" id="3.30.420.40">
    <property type="match status" value="2"/>
</dbReference>
<dbReference type="Gene3D" id="3.90.640.10">
    <property type="entry name" value="Actin, Chain A, domain 4"/>
    <property type="match status" value="1"/>
</dbReference>
<dbReference type="Gene3D" id="2.60.34.10">
    <property type="entry name" value="Substrate Binding Domain Of DNAk, Chain A, domain 1"/>
    <property type="match status" value="1"/>
</dbReference>
<dbReference type="HAMAP" id="MF_00332">
    <property type="entry name" value="DnaK"/>
    <property type="match status" value="1"/>
</dbReference>
<dbReference type="InterPro" id="IPR043129">
    <property type="entry name" value="ATPase_NBD"/>
</dbReference>
<dbReference type="InterPro" id="IPR012725">
    <property type="entry name" value="Chaperone_DnaK"/>
</dbReference>
<dbReference type="InterPro" id="IPR018181">
    <property type="entry name" value="Heat_shock_70_CS"/>
</dbReference>
<dbReference type="InterPro" id="IPR029048">
    <property type="entry name" value="HSP70_C_sf"/>
</dbReference>
<dbReference type="InterPro" id="IPR029047">
    <property type="entry name" value="HSP70_peptide-bd_sf"/>
</dbReference>
<dbReference type="InterPro" id="IPR013126">
    <property type="entry name" value="Hsp_70_fam"/>
</dbReference>
<dbReference type="NCBIfam" id="NF001413">
    <property type="entry name" value="PRK00290.1"/>
    <property type="match status" value="1"/>
</dbReference>
<dbReference type="NCBIfam" id="NF003520">
    <property type="entry name" value="PRK05183.1"/>
    <property type="match status" value="1"/>
</dbReference>
<dbReference type="NCBIfam" id="TIGR02350">
    <property type="entry name" value="prok_dnaK"/>
    <property type="match status" value="1"/>
</dbReference>
<dbReference type="PANTHER" id="PTHR19375">
    <property type="entry name" value="HEAT SHOCK PROTEIN 70KDA"/>
    <property type="match status" value="1"/>
</dbReference>
<dbReference type="Pfam" id="PF00012">
    <property type="entry name" value="HSP70"/>
    <property type="match status" value="1"/>
</dbReference>
<dbReference type="PRINTS" id="PR00301">
    <property type="entry name" value="HEATSHOCK70"/>
</dbReference>
<dbReference type="SUPFAM" id="SSF53067">
    <property type="entry name" value="Actin-like ATPase domain"/>
    <property type="match status" value="2"/>
</dbReference>
<dbReference type="SUPFAM" id="SSF100934">
    <property type="entry name" value="Heat shock protein 70kD (HSP70), C-terminal subdomain"/>
    <property type="match status" value="1"/>
</dbReference>
<dbReference type="SUPFAM" id="SSF100920">
    <property type="entry name" value="Heat shock protein 70kD (HSP70), peptide-binding domain"/>
    <property type="match status" value="1"/>
</dbReference>
<dbReference type="PROSITE" id="PS00297">
    <property type="entry name" value="HSP70_1"/>
    <property type="match status" value="1"/>
</dbReference>
<dbReference type="PROSITE" id="PS00329">
    <property type="entry name" value="HSP70_2"/>
    <property type="match status" value="1"/>
</dbReference>
<dbReference type="PROSITE" id="PS01036">
    <property type="entry name" value="HSP70_3"/>
    <property type="match status" value="1"/>
</dbReference>
<comment type="function">
    <text evidence="1">Acts as a chaperone.</text>
</comment>
<comment type="induction">
    <text evidence="1">By stress conditions e.g. heat shock.</text>
</comment>
<comment type="similarity">
    <text evidence="1">Belongs to the heat shock protein 70 family.</text>
</comment>
<feature type="chain" id="PRO_1000119681" description="Chaperone protein DnaK">
    <location>
        <begin position="1"/>
        <end position="653"/>
    </location>
</feature>
<feature type="region of interest" description="Disordered" evidence="2">
    <location>
        <begin position="612"/>
        <end position="653"/>
    </location>
</feature>
<feature type="compositionally biased region" description="Low complexity" evidence="2">
    <location>
        <begin position="627"/>
        <end position="639"/>
    </location>
</feature>
<feature type="modified residue" description="Phosphothreonine; by autocatalysis" evidence="1">
    <location>
        <position position="200"/>
    </location>
</feature>
<protein>
    <recommendedName>
        <fullName evidence="1">Chaperone protein DnaK</fullName>
    </recommendedName>
    <alternativeName>
        <fullName evidence="1">HSP70</fullName>
    </alternativeName>
    <alternativeName>
        <fullName evidence="1">Heat shock 70 kDa protein</fullName>
    </alternativeName>
    <alternativeName>
        <fullName evidence="1">Heat shock protein 70</fullName>
    </alternativeName>
</protein>
<name>DNAK_PARP8</name>
<keyword id="KW-0067">ATP-binding</keyword>
<keyword id="KW-0143">Chaperone</keyword>
<keyword id="KW-0547">Nucleotide-binding</keyword>
<keyword id="KW-0597">Phosphoprotein</keyword>
<keyword id="KW-1185">Reference proteome</keyword>
<keyword id="KW-0346">Stress response</keyword>